<accession>Q9P7Z7</accession>
<dbReference type="EMBL" id="CU329671">
    <property type="protein sequence ID" value="CAB75401.1"/>
    <property type="molecule type" value="Genomic_DNA"/>
</dbReference>
<dbReference type="RefSeq" id="NP_596649.1">
    <property type="nucleotide sequence ID" value="NM_001022571.2"/>
</dbReference>
<dbReference type="SMR" id="Q9P7Z7"/>
<dbReference type="FunCoup" id="Q9P7Z7">
    <property type="interactions" value="171"/>
</dbReference>
<dbReference type="STRING" id="284812.Q9P7Z7"/>
<dbReference type="PaxDb" id="4896-SPBC26H8.14c.1"/>
<dbReference type="EnsemblFungi" id="SPBC26H8.14c.1">
    <property type="protein sequence ID" value="SPBC26H8.14c.1:pep"/>
    <property type="gene ID" value="SPBC26H8.14c"/>
</dbReference>
<dbReference type="GeneID" id="2540423"/>
<dbReference type="KEGG" id="spo:2540423"/>
<dbReference type="PomBase" id="SPBC26H8.14c">
    <property type="gene designation" value="cox17"/>
</dbReference>
<dbReference type="VEuPathDB" id="FungiDB:SPBC26H8.14c"/>
<dbReference type="eggNOG" id="KOG3496">
    <property type="taxonomic scope" value="Eukaryota"/>
</dbReference>
<dbReference type="HOGENOM" id="CLU_149618_1_3_1"/>
<dbReference type="InParanoid" id="Q9P7Z7"/>
<dbReference type="OMA" id="CCVCKPE"/>
<dbReference type="PhylomeDB" id="Q9P7Z7"/>
<dbReference type="PRO" id="PR:Q9P7Z7"/>
<dbReference type="Proteomes" id="UP000002485">
    <property type="component" value="Chromosome II"/>
</dbReference>
<dbReference type="GO" id="GO:0005829">
    <property type="term" value="C:cytosol"/>
    <property type="evidence" value="ECO:0000250"/>
    <property type="project" value="PomBase"/>
</dbReference>
<dbReference type="GO" id="GO:0005758">
    <property type="term" value="C:mitochondrial intermembrane space"/>
    <property type="evidence" value="ECO:0000318"/>
    <property type="project" value="GO_Central"/>
</dbReference>
<dbReference type="GO" id="GO:0016531">
    <property type="term" value="F:copper chaperone activity"/>
    <property type="evidence" value="ECO:0000318"/>
    <property type="project" value="GO_Central"/>
</dbReference>
<dbReference type="GO" id="GO:0005507">
    <property type="term" value="F:copper ion binding"/>
    <property type="evidence" value="ECO:0007669"/>
    <property type="project" value="InterPro"/>
</dbReference>
<dbReference type="GO" id="GO:0033617">
    <property type="term" value="P:mitochondrial cytochrome c oxidase assembly"/>
    <property type="evidence" value="ECO:0000318"/>
    <property type="project" value="GO_Central"/>
</dbReference>
<dbReference type="FunFam" id="1.10.287.1130:FF:000005">
    <property type="entry name" value="Cytochrome c oxidase assembly protein subunit 17"/>
    <property type="match status" value="1"/>
</dbReference>
<dbReference type="Gene3D" id="1.10.287.1130">
    <property type="entry name" value="CytochromE C oxidase copper chaperone"/>
    <property type="match status" value="1"/>
</dbReference>
<dbReference type="InterPro" id="IPR009069">
    <property type="entry name" value="Cys_alpha_HP_mot_SF"/>
</dbReference>
<dbReference type="InterPro" id="IPR007745">
    <property type="entry name" value="Cyt_c_oxidase_Cu-chaperone"/>
</dbReference>
<dbReference type="PANTHER" id="PTHR16719">
    <property type="entry name" value="CYTOCHROME C OXIDASE COPPER CHAPERONE"/>
    <property type="match status" value="1"/>
</dbReference>
<dbReference type="PANTHER" id="PTHR16719:SF0">
    <property type="entry name" value="CYTOCHROME C OXIDASE COPPER CHAPERONE"/>
    <property type="match status" value="1"/>
</dbReference>
<dbReference type="Pfam" id="PF05051">
    <property type="entry name" value="COX17"/>
    <property type="match status" value="1"/>
</dbReference>
<dbReference type="SUPFAM" id="SSF47072">
    <property type="entry name" value="Cysteine alpha-hairpin motif"/>
    <property type="match status" value="1"/>
</dbReference>
<dbReference type="PROSITE" id="PS51808">
    <property type="entry name" value="CHCH"/>
    <property type="match status" value="1"/>
</dbReference>
<keyword id="KW-0143">Chaperone</keyword>
<keyword id="KW-0186">Copper</keyword>
<keyword id="KW-1015">Disulfide bond</keyword>
<keyword id="KW-0479">Metal-binding</keyword>
<keyword id="KW-0496">Mitochondrion</keyword>
<keyword id="KW-1185">Reference proteome</keyword>
<sequence>MSSSTEPSTATKVSEPAPIASEEKPKPCCACPETKQARDACMLQSSNGPIECAKLIEAHKKCMAQYGYEV</sequence>
<reference key="1">
    <citation type="journal article" date="2002" name="Nature">
        <title>The genome sequence of Schizosaccharomyces pombe.</title>
        <authorList>
            <person name="Wood V."/>
            <person name="Gwilliam R."/>
            <person name="Rajandream M.A."/>
            <person name="Lyne M.H."/>
            <person name="Lyne R."/>
            <person name="Stewart A."/>
            <person name="Sgouros J.G."/>
            <person name="Peat N."/>
            <person name="Hayles J."/>
            <person name="Baker S.G."/>
            <person name="Basham D."/>
            <person name="Bowman S."/>
            <person name="Brooks K."/>
            <person name="Brown D."/>
            <person name="Brown S."/>
            <person name="Chillingworth T."/>
            <person name="Churcher C.M."/>
            <person name="Collins M."/>
            <person name="Connor R."/>
            <person name="Cronin A."/>
            <person name="Davis P."/>
            <person name="Feltwell T."/>
            <person name="Fraser A."/>
            <person name="Gentles S."/>
            <person name="Goble A."/>
            <person name="Hamlin N."/>
            <person name="Harris D.E."/>
            <person name="Hidalgo J."/>
            <person name="Hodgson G."/>
            <person name="Holroyd S."/>
            <person name="Hornsby T."/>
            <person name="Howarth S."/>
            <person name="Huckle E.J."/>
            <person name="Hunt S."/>
            <person name="Jagels K."/>
            <person name="James K.D."/>
            <person name="Jones L."/>
            <person name="Jones M."/>
            <person name="Leather S."/>
            <person name="McDonald S."/>
            <person name="McLean J."/>
            <person name="Mooney P."/>
            <person name="Moule S."/>
            <person name="Mungall K.L."/>
            <person name="Murphy L.D."/>
            <person name="Niblett D."/>
            <person name="Odell C."/>
            <person name="Oliver K."/>
            <person name="O'Neil S."/>
            <person name="Pearson D."/>
            <person name="Quail M.A."/>
            <person name="Rabbinowitsch E."/>
            <person name="Rutherford K.M."/>
            <person name="Rutter S."/>
            <person name="Saunders D."/>
            <person name="Seeger K."/>
            <person name="Sharp S."/>
            <person name="Skelton J."/>
            <person name="Simmonds M.N."/>
            <person name="Squares R."/>
            <person name="Squares S."/>
            <person name="Stevens K."/>
            <person name="Taylor K."/>
            <person name="Taylor R.G."/>
            <person name="Tivey A."/>
            <person name="Walsh S.V."/>
            <person name="Warren T."/>
            <person name="Whitehead S."/>
            <person name="Woodward J.R."/>
            <person name="Volckaert G."/>
            <person name="Aert R."/>
            <person name="Robben J."/>
            <person name="Grymonprez B."/>
            <person name="Weltjens I."/>
            <person name="Vanstreels E."/>
            <person name="Rieger M."/>
            <person name="Schaefer M."/>
            <person name="Mueller-Auer S."/>
            <person name="Gabel C."/>
            <person name="Fuchs M."/>
            <person name="Duesterhoeft A."/>
            <person name="Fritzc C."/>
            <person name="Holzer E."/>
            <person name="Moestl D."/>
            <person name="Hilbert H."/>
            <person name="Borzym K."/>
            <person name="Langer I."/>
            <person name="Beck A."/>
            <person name="Lehrach H."/>
            <person name="Reinhardt R."/>
            <person name="Pohl T.M."/>
            <person name="Eger P."/>
            <person name="Zimmermann W."/>
            <person name="Wedler H."/>
            <person name="Wambutt R."/>
            <person name="Purnelle B."/>
            <person name="Goffeau A."/>
            <person name="Cadieu E."/>
            <person name="Dreano S."/>
            <person name="Gloux S."/>
            <person name="Lelaure V."/>
            <person name="Mottier S."/>
            <person name="Galibert F."/>
            <person name="Aves S.J."/>
            <person name="Xiang Z."/>
            <person name="Hunt C."/>
            <person name="Moore K."/>
            <person name="Hurst S.M."/>
            <person name="Lucas M."/>
            <person name="Rochet M."/>
            <person name="Gaillardin C."/>
            <person name="Tallada V.A."/>
            <person name="Garzon A."/>
            <person name="Thode G."/>
            <person name="Daga R.R."/>
            <person name="Cruzado L."/>
            <person name="Jimenez J."/>
            <person name="Sanchez M."/>
            <person name="del Rey F."/>
            <person name="Benito J."/>
            <person name="Dominguez A."/>
            <person name="Revuelta J.L."/>
            <person name="Moreno S."/>
            <person name="Armstrong J."/>
            <person name="Forsburg S.L."/>
            <person name="Cerutti L."/>
            <person name="Lowe T."/>
            <person name="McCombie W.R."/>
            <person name="Paulsen I."/>
            <person name="Potashkin J."/>
            <person name="Shpakovski G.V."/>
            <person name="Ussery D."/>
            <person name="Barrell B.G."/>
            <person name="Nurse P."/>
        </authorList>
    </citation>
    <scope>NUCLEOTIDE SEQUENCE [LARGE SCALE GENOMIC DNA]</scope>
    <source>
        <strain>972 / ATCC 24843</strain>
    </source>
</reference>
<comment type="function">
    <text evidence="1">Copper chaperone for cytochrome c oxidase (COX). Binds two copper ions and deliver them to the Cu(A) site of COX (By similarity).</text>
</comment>
<comment type="subcellular location">
    <subcellularLocation>
        <location evidence="1">Mitochondrion intermembrane space</location>
    </subcellularLocation>
</comment>
<comment type="similarity">
    <text evidence="5">Belongs to the COX17 family.</text>
</comment>
<organism>
    <name type="scientific">Schizosaccharomyces pombe (strain 972 / ATCC 24843)</name>
    <name type="common">Fission yeast</name>
    <dbReference type="NCBI Taxonomy" id="284812"/>
    <lineage>
        <taxon>Eukaryota</taxon>
        <taxon>Fungi</taxon>
        <taxon>Dikarya</taxon>
        <taxon>Ascomycota</taxon>
        <taxon>Taphrinomycotina</taxon>
        <taxon>Schizosaccharomycetes</taxon>
        <taxon>Schizosaccharomycetales</taxon>
        <taxon>Schizosaccharomycetaceae</taxon>
        <taxon>Schizosaccharomyces</taxon>
    </lineage>
</organism>
<gene>
    <name type="primary">cox17</name>
    <name type="ORF">SPBC26H8.14c</name>
</gene>
<feature type="chain" id="PRO_0000239059" description="Cytochrome c oxidase copper chaperone">
    <location>
        <begin position="1"/>
        <end position="70"/>
    </location>
</feature>
<feature type="domain" description="CHCH" evidence="3">
    <location>
        <begin position="28"/>
        <end position="70"/>
    </location>
</feature>
<feature type="region of interest" description="Disordered" evidence="4">
    <location>
        <begin position="1"/>
        <end position="26"/>
    </location>
</feature>
<feature type="short sequence motif" description="Cx9C motif 1" evidence="3">
    <location>
        <begin position="31"/>
        <end position="41"/>
    </location>
</feature>
<feature type="short sequence motif" description="Cx9C motif 2" evidence="3">
    <location>
        <begin position="52"/>
        <end position="62"/>
    </location>
</feature>
<feature type="compositionally biased region" description="Polar residues" evidence="4">
    <location>
        <begin position="1"/>
        <end position="12"/>
    </location>
</feature>
<feature type="binding site" evidence="2">
    <location>
        <position position="28"/>
    </location>
    <ligand>
        <name>Cu cation</name>
        <dbReference type="ChEBI" id="CHEBI:23378"/>
    </ligand>
</feature>
<feature type="binding site" evidence="2">
    <location>
        <position position="29"/>
    </location>
    <ligand>
        <name>Cu cation</name>
        <dbReference type="ChEBI" id="CHEBI:23378"/>
    </ligand>
</feature>
<feature type="disulfide bond" evidence="3">
    <location>
        <begin position="31"/>
        <end position="62"/>
    </location>
</feature>
<feature type="disulfide bond" evidence="3">
    <location>
        <begin position="41"/>
        <end position="52"/>
    </location>
</feature>
<protein>
    <recommendedName>
        <fullName>Cytochrome c oxidase copper chaperone</fullName>
    </recommendedName>
</protein>
<evidence type="ECO:0000250" key="1"/>
<evidence type="ECO:0000250" key="2">
    <source>
        <dbReference type="UniProtKB" id="Q14061"/>
    </source>
</evidence>
<evidence type="ECO:0000255" key="3">
    <source>
        <dbReference type="PROSITE-ProRule" id="PRU01150"/>
    </source>
</evidence>
<evidence type="ECO:0000256" key="4">
    <source>
        <dbReference type="SAM" id="MobiDB-lite"/>
    </source>
</evidence>
<evidence type="ECO:0000305" key="5"/>
<name>COX17_SCHPO</name>
<proteinExistence type="inferred from homology"/>